<comment type="function">
    <text evidence="1">Catalyzes the condensation of the acetyl group of acetyl-CoA with 3-methyl-2-oxobutanoate (2-ketoisovalerate) to form 3-carboxy-3-hydroxy-4-methylpentanoate (2-isopropylmalate).</text>
</comment>
<comment type="catalytic activity">
    <reaction evidence="1">
        <text>3-methyl-2-oxobutanoate + acetyl-CoA + H2O = (2S)-2-isopropylmalate + CoA + H(+)</text>
        <dbReference type="Rhea" id="RHEA:21524"/>
        <dbReference type="ChEBI" id="CHEBI:1178"/>
        <dbReference type="ChEBI" id="CHEBI:11851"/>
        <dbReference type="ChEBI" id="CHEBI:15377"/>
        <dbReference type="ChEBI" id="CHEBI:15378"/>
        <dbReference type="ChEBI" id="CHEBI:57287"/>
        <dbReference type="ChEBI" id="CHEBI:57288"/>
        <dbReference type="EC" id="2.3.3.13"/>
    </reaction>
</comment>
<comment type="cofactor">
    <cofactor evidence="1">
        <name>Mn(2+)</name>
        <dbReference type="ChEBI" id="CHEBI:29035"/>
    </cofactor>
</comment>
<comment type="pathway">
    <text evidence="1">Amino-acid biosynthesis; L-leucine biosynthesis; L-leucine from 3-methyl-2-oxobutanoate: step 1/4.</text>
</comment>
<comment type="subunit">
    <text evidence="1">Homodimer.</text>
</comment>
<comment type="subcellular location">
    <subcellularLocation>
        <location evidence="1">Cytoplasm</location>
    </subcellularLocation>
</comment>
<comment type="similarity">
    <text evidence="1">Belongs to the alpha-IPM synthase/homocitrate synthase family. LeuA type 1 subfamily.</text>
</comment>
<proteinExistence type="inferred from homology"/>
<keyword id="KW-0028">Amino-acid biosynthesis</keyword>
<keyword id="KW-0100">Branched-chain amino acid biosynthesis</keyword>
<keyword id="KW-0963">Cytoplasm</keyword>
<keyword id="KW-0432">Leucine biosynthesis</keyword>
<keyword id="KW-0464">Manganese</keyword>
<keyword id="KW-0479">Metal-binding</keyword>
<keyword id="KW-1185">Reference proteome</keyword>
<keyword id="KW-0808">Transferase</keyword>
<reference key="1">
    <citation type="journal article" date="2009" name="Stand. Genomic Sci.">
        <title>Complete genome sequence of Acidimicrobium ferrooxidans type strain (ICP).</title>
        <authorList>
            <person name="Clum A."/>
            <person name="Nolan M."/>
            <person name="Lang E."/>
            <person name="Glavina Del Rio T."/>
            <person name="Tice H."/>
            <person name="Copeland A."/>
            <person name="Cheng J.F."/>
            <person name="Lucas S."/>
            <person name="Chen F."/>
            <person name="Bruce D."/>
            <person name="Goodwin L."/>
            <person name="Pitluck S."/>
            <person name="Ivanova N."/>
            <person name="Mavrommatis K."/>
            <person name="Mikhailova N."/>
            <person name="Pati A."/>
            <person name="Chen A."/>
            <person name="Palaniappan K."/>
            <person name="Goker M."/>
            <person name="Spring S."/>
            <person name="Land M."/>
            <person name="Hauser L."/>
            <person name="Chang Y.J."/>
            <person name="Jeffries C.C."/>
            <person name="Chain P."/>
            <person name="Bristow J."/>
            <person name="Eisen J.A."/>
            <person name="Markowitz V."/>
            <person name="Hugenholtz P."/>
            <person name="Kyrpides N.C."/>
            <person name="Klenk H.P."/>
            <person name="Lapidus A."/>
        </authorList>
    </citation>
    <scope>NUCLEOTIDE SEQUENCE [LARGE SCALE GENOMIC DNA]</scope>
    <source>
        <strain>DSM 10331 / JCM 15462 / NBRC 103882 / ICP</strain>
    </source>
</reference>
<name>LEU1_ACIFD</name>
<sequence length="516" mass="55125">MDEVGTQERIRIFDTTLRDGEQAPGISLDPLEKLEIAEQLARLGVDIIEAGFPVASQGDFDAVRQIARQVHGPVICGLSRTHVADIERCYEAVRDAEHHRIHVFISTSPSHLEHMLRMSEDQVVEAVRRAIARARELVDDVEFSPQDATRTPLPFLYRVLQVAVDEGASTLNIPDTVGYGIPWDFARMVESVRREVAGSYVISCHCHNDLGLATANSLAAVAAGARQVECCINGIGERAGNAALEEVVMGLAIRSDVIGDVTTGIDTRELARTSRLVSRLTGYPVQYNKAVVGRNAFAHESGIHQHGVLTDRSTYEVIDAASVGQEAAQIVLGKHSGRHAFQEALARMGIALEGDALNATFQRFKELADRKVELSEADLEAIVAEELGTTLADRFELVSFRVEAGTGREAVASATVLVDGTPVEASASGNGMVDALGRVLAEATALEARLTGFSVTSVTGGADALGSVAVTVDVGGHEVSGRGVSTDIVEASARALLNALNRAARVREKASNRETP</sequence>
<protein>
    <recommendedName>
        <fullName evidence="1">2-isopropylmalate synthase</fullName>
        <ecNumber evidence="1">2.3.3.13</ecNumber>
    </recommendedName>
    <alternativeName>
        <fullName evidence="1">Alpha-IPM synthase</fullName>
    </alternativeName>
    <alternativeName>
        <fullName evidence="1">Alpha-isopropylmalate synthase</fullName>
    </alternativeName>
</protein>
<accession>C7M0E4</accession>
<organism>
    <name type="scientific">Acidimicrobium ferrooxidans (strain DSM 10331 / JCM 15462 / NBRC 103882 / ICP)</name>
    <dbReference type="NCBI Taxonomy" id="525909"/>
    <lineage>
        <taxon>Bacteria</taxon>
        <taxon>Bacillati</taxon>
        <taxon>Actinomycetota</taxon>
        <taxon>Acidimicrobiia</taxon>
        <taxon>Acidimicrobiales</taxon>
        <taxon>Acidimicrobiaceae</taxon>
        <taxon>Acidimicrobium</taxon>
    </lineage>
</organism>
<feature type="chain" id="PRO_0000406892" description="2-isopropylmalate synthase">
    <location>
        <begin position="1"/>
        <end position="516"/>
    </location>
</feature>
<feature type="domain" description="Pyruvate carboxyltransferase" evidence="1">
    <location>
        <begin position="10"/>
        <end position="271"/>
    </location>
</feature>
<feature type="region of interest" description="Regulatory domain" evidence="1">
    <location>
        <begin position="396"/>
        <end position="516"/>
    </location>
</feature>
<feature type="binding site" evidence="1">
    <location>
        <position position="19"/>
    </location>
    <ligand>
        <name>Mn(2+)</name>
        <dbReference type="ChEBI" id="CHEBI:29035"/>
    </ligand>
</feature>
<feature type="binding site" evidence="1">
    <location>
        <position position="205"/>
    </location>
    <ligand>
        <name>Mn(2+)</name>
        <dbReference type="ChEBI" id="CHEBI:29035"/>
    </ligand>
</feature>
<feature type="binding site" evidence="1">
    <location>
        <position position="207"/>
    </location>
    <ligand>
        <name>Mn(2+)</name>
        <dbReference type="ChEBI" id="CHEBI:29035"/>
    </ligand>
</feature>
<feature type="binding site" evidence="1">
    <location>
        <position position="241"/>
    </location>
    <ligand>
        <name>Mn(2+)</name>
        <dbReference type="ChEBI" id="CHEBI:29035"/>
    </ligand>
</feature>
<gene>
    <name evidence="1" type="primary">leuA</name>
    <name type="ordered locus">Afer_1529</name>
</gene>
<evidence type="ECO:0000255" key="1">
    <source>
        <dbReference type="HAMAP-Rule" id="MF_01025"/>
    </source>
</evidence>
<dbReference type="EC" id="2.3.3.13" evidence="1"/>
<dbReference type="EMBL" id="CP001631">
    <property type="protein sequence ID" value="ACU54452.1"/>
    <property type="molecule type" value="Genomic_DNA"/>
</dbReference>
<dbReference type="SMR" id="C7M0E4"/>
<dbReference type="STRING" id="525909.Afer_1529"/>
<dbReference type="KEGG" id="afo:Afer_1529"/>
<dbReference type="eggNOG" id="COG0119">
    <property type="taxonomic scope" value="Bacteria"/>
</dbReference>
<dbReference type="HOGENOM" id="CLU_022158_0_1_11"/>
<dbReference type="OrthoDB" id="9803573at2"/>
<dbReference type="UniPathway" id="UPA00048">
    <property type="reaction ID" value="UER00070"/>
</dbReference>
<dbReference type="Proteomes" id="UP000000771">
    <property type="component" value="Chromosome"/>
</dbReference>
<dbReference type="GO" id="GO:0005737">
    <property type="term" value="C:cytoplasm"/>
    <property type="evidence" value="ECO:0007669"/>
    <property type="project" value="UniProtKB-SubCell"/>
</dbReference>
<dbReference type="GO" id="GO:0003852">
    <property type="term" value="F:2-isopropylmalate synthase activity"/>
    <property type="evidence" value="ECO:0007669"/>
    <property type="project" value="UniProtKB-UniRule"/>
</dbReference>
<dbReference type="GO" id="GO:0003985">
    <property type="term" value="F:acetyl-CoA C-acetyltransferase activity"/>
    <property type="evidence" value="ECO:0007669"/>
    <property type="project" value="UniProtKB-UniRule"/>
</dbReference>
<dbReference type="GO" id="GO:0030145">
    <property type="term" value="F:manganese ion binding"/>
    <property type="evidence" value="ECO:0007669"/>
    <property type="project" value="UniProtKB-UniRule"/>
</dbReference>
<dbReference type="GO" id="GO:0009098">
    <property type="term" value="P:L-leucine biosynthetic process"/>
    <property type="evidence" value="ECO:0007669"/>
    <property type="project" value="UniProtKB-UniRule"/>
</dbReference>
<dbReference type="CDD" id="cd07940">
    <property type="entry name" value="DRE_TIM_IPMS"/>
    <property type="match status" value="1"/>
</dbReference>
<dbReference type="FunFam" id="1.10.238.260:FF:000001">
    <property type="entry name" value="2-isopropylmalate synthase"/>
    <property type="match status" value="1"/>
</dbReference>
<dbReference type="FunFam" id="3.20.20.70:FF:000010">
    <property type="entry name" value="2-isopropylmalate synthase"/>
    <property type="match status" value="1"/>
</dbReference>
<dbReference type="Gene3D" id="1.10.238.260">
    <property type="match status" value="1"/>
</dbReference>
<dbReference type="Gene3D" id="3.30.160.270">
    <property type="match status" value="1"/>
</dbReference>
<dbReference type="Gene3D" id="3.20.20.70">
    <property type="entry name" value="Aldolase class I"/>
    <property type="match status" value="1"/>
</dbReference>
<dbReference type="HAMAP" id="MF_01025">
    <property type="entry name" value="LeuA_type1"/>
    <property type="match status" value="1"/>
</dbReference>
<dbReference type="InterPro" id="IPR050073">
    <property type="entry name" value="2-IPM_HCS-like"/>
</dbReference>
<dbReference type="InterPro" id="IPR013709">
    <property type="entry name" value="2-isopropylmalate_synth_dimer"/>
</dbReference>
<dbReference type="InterPro" id="IPR002034">
    <property type="entry name" value="AIPM/Hcit_synth_CS"/>
</dbReference>
<dbReference type="InterPro" id="IPR013785">
    <property type="entry name" value="Aldolase_TIM"/>
</dbReference>
<dbReference type="InterPro" id="IPR054691">
    <property type="entry name" value="LeuA/HCS_post-cat"/>
</dbReference>
<dbReference type="InterPro" id="IPR036230">
    <property type="entry name" value="LeuA_allosteric_dom_sf"/>
</dbReference>
<dbReference type="InterPro" id="IPR005671">
    <property type="entry name" value="LeuA_bact_synth"/>
</dbReference>
<dbReference type="InterPro" id="IPR000891">
    <property type="entry name" value="PYR_CT"/>
</dbReference>
<dbReference type="NCBIfam" id="TIGR00973">
    <property type="entry name" value="leuA_bact"/>
    <property type="match status" value="1"/>
</dbReference>
<dbReference type="NCBIfam" id="NF002086">
    <property type="entry name" value="PRK00915.1-3"/>
    <property type="match status" value="1"/>
</dbReference>
<dbReference type="PANTHER" id="PTHR10277:SF9">
    <property type="entry name" value="2-ISOPROPYLMALATE SYNTHASE 1, CHLOROPLASTIC-RELATED"/>
    <property type="match status" value="1"/>
</dbReference>
<dbReference type="PANTHER" id="PTHR10277">
    <property type="entry name" value="HOMOCITRATE SYNTHASE-RELATED"/>
    <property type="match status" value="1"/>
</dbReference>
<dbReference type="Pfam" id="PF22617">
    <property type="entry name" value="HCS_D2"/>
    <property type="match status" value="1"/>
</dbReference>
<dbReference type="Pfam" id="PF00682">
    <property type="entry name" value="HMGL-like"/>
    <property type="match status" value="1"/>
</dbReference>
<dbReference type="Pfam" id="PF08502">
    <property type="entry name" value="LeuA_dimer"/>
    <property type="match status" value="1"/>
</dbReference>
<dbReference type="SMART" id="SM00917">
    <property type="entry name" value="LeuA_dimer"/>
    <property type="match status" value="1"/>
</dbReference>
<dbReference type="SUPFAM" id="SSF110921">
    <property type="entry name" value="2-isopropylmalate synthase LeuA, allosteric (dimerisation) domain"/>
    <property type="match status" value="1"/>
</dbReference>
<dbReference type="SUPFAM" id="SSF51569">
    <property type="entry name" value="Aldolase"/>
    <property type="match status" value="1"/>
</dbReference>
<dbReference type="PROSITE" id="PS00815">
    <property type="entry name" value="AIPM_HOMOCIT_SYNTH_1"/>
    <property type="match status" value="1"/>
</dbReference>
<dbReference type="PROSITE" id="PS00816">
    <property type="entry name" value="AIPM_HOMOCIT_SYNTH_2"/>
    <property type="match status" value="1"/>
</dbReference>
<dbReference type="PROSITE" id="PS50991">
    <property type="entry name" value="PYR_CT"/>
    <property type="match status" value="1"/>
</dbReference>